<name>AROB_STRPJ</name>
<proteinExistence type="inferred from homology"/>
<reference key="1">
    <citation type="journal article" date="2009" name="J. Bacteriol.">
        <title>Role of conjugative elements in the evolution of the multidrug-resistant pandemic clone Streptococcus pneumoniae Spain23F ST81.</title>
        <authorList>
            <person name="Croucher N.J."/>
            <person name="Walker D."/>
            <person name="Romero P."/>
            <person name="Lennard N."/>
            <person name="Paterson G.K."/>
            <person name="Bason N.C."/>
            <person name="Mitchell A.M."/>
            <person name="Quail M.A."/>
            <person name="Andrew P.W."/>
            <person name="Parkhill J."/>
            <person name="Bentley S.D."/>
            <person name="Mitchell T.J."/>
        </authorList>
    </citation>
    <scope>NUCLEOTIDE SEQUENCE [LARGE SCALE GENOMIC DNA]</scope>
    <source>
        <strain>ATCC 700669 / Spain 23F-1</strain>
    </source>
</reference>
<dbReference type="EC" id="4.2.3.4" evidence="1"/>
<dbReference type="EMBL" id="FM211187">
    <property type="protein sequence ID" value="CAR69141.1"/>
    <property type="molecule type" value="Genomic_DNA"/>
</dbReference>
<dbReference type="RefSeq" id="WP_000702137.1">
    <property type="nucleotide sequence ID" value="NC_011900.1"/>
</dbReference>
<dbReference type="SMR" id="B8ZKM4"/>
<dbReference type="KEGG" id="sne:SPN23F13410"/>
<dbReference type="HOGENOM" id="CLU_001201_0_2_9"/>
<dbReference type="UniPathway" id="UPA00053">
    <property type="reaction ID" value="UER00085"/>
</dbReference>
<dbReference type="GO" id="GO:0005737">
    <property type="term" value="C:cytoplasm"/>
    <property type="evidence" value="ECO:0007669"/>
    <property type="project" value="UniProtKB-SubCell"/>
</dbReference>
<dbReference type="GO" id="GO:0003856">
    <property type="term" value="F:3-dehydroquinate synthase activity"/>
    <property type="evidence" value="ECO:0007669"/>
    <property type="project" value="UniProtKB-UniRule"/>
</dbReference>
<dbReference type="GO" id="GO:0046872">
    <property type="term" value="F:metal ion binding"/>
    <property type="evidence" value="ECO:0007669"/>
    <property type="project" value="UniProtKB-KW"/>
</dbReference>
<dbReference type="GO" id="GO:0000166">
    <property type="term" value="F:nucleotide binding"/>
    <property type="evidence" value="ECO:0007669"/>
    <property type="project" value="UniProtKB-KW"/>
</dbReference>
<dbReference type="GO" id="GO:0008652">
    <property type="term" value="P:amino acid biosynthetic process"/>
    <property type="evidence" value="ECO:0007669"/>
    <property type="project" value="UniProtKB-KW"/>
</dbReference>
<dbReference type="GO" id="GO:0009073">
    <property type="term" value="P:aromatic amino acid family biosynthetic process"/>
    <property type="evidence" value="ECO:0007669"/>
    <property type="project" value="UniProtKB-KW"/>
</dbReference>
<dbReference type="GO" id="GO:0009423">
    <property type="term" value="P:chorismate biosynthetic process"/>
    <property type="evidence" value="ECO:0007669"/>
    <property type="project" value="UniProtKB-UniRule"/>
</dbReference>
<dbReference type="CDD" id="cd08195">
    <property type="entry name" value="DHQS"/>
    <property type="match status" value="1"/>
</dbReference>
<dbReference type="FunFam" id="1.20.1090.10:FF:000012">
    <property type="entry name" value="3-dehydroquinate synthase"/>
    <property type="match status" value="1"/>
</dbReference>
<dbReference type="FunFam" id="3.40.50.1970:FF:000001">
    <property type="entry name" value="3-dehydroquinate synthase"/>
    <property type="match status" value="1"/>
</dbReference>
<dbReference type="Gene3D" id="3.40.50.1970">
    <property type="match status" value="1"/>
</dbReference>
<dbReference type="Gene3D" id="1.20.1090.10">
    <property type="entry name" value="Dehydroquinate synthase-like - alpha domain"/>
    <property type="match status" value="1"/>
</dbReference>
<dbReference type="HAMAP" id="MF_00110">
    <property type="entry name" value="DHQ_synthase"/>
    <property type="match status" value="1"/>
</dbReference>
<dbReference type="InterPro" id="IPR050071">
    <property type="entry name" value="Dehydroquinate_synthase"/>
</dbReference>
<dbReference type="InterPro" id="IPR016037">
    <property type="entry name" value="DHQ_synth_AroB"/>
</dbReference>
<dbReference type="InterPro" id="IPR030963">
    <property type="entry name" value="DHQ_synth_fam"/>
</dbReference>
<dbReference type="InterPro" id="IPR030960">
    <property type="entry name" value="DHQS/DOIS_N"/>
</dbReference>
<dbReference type="InterPro" id="IPR056179">
    <property type="entry name" value="DHQS_C"/>
</dbReference>
<dbReference type="NCBIfam" id="TIGR01357">
    <property type="entry name" value="aroB"/>
    <property type="match status" value="1"/>
</dbReference>
<dbReference type="PANTHER" id="PTHR43622">
    <property type="entry name" value="3-DEHYDROQUINATE SYNTHASE"/>
    <property type="match status" value="1"/>
</dbReference>
<dbReference type="PANTHER" id="PTHR43622:SF7">
    <property type="entry name" value="3-DEHYDROQUINATE SYNTHASE, CHLOROPLASTIC"/>
    <property type="match status" value="1"/>
</dbReference>
<dbReference type="Pfam" id="PF01761">
    <property type="entry name" value="DHQ_synthase"/>
    <property type="match status" value="1"/>
</dbReference>
<dbReference type="Pfam" id="PF24621">
    <property type="entry name" value="DHQS_C"/>
    <property type="match status" value="1"/>
</dbReference>
<dbReference type="PIRSF" id="PIRSF001455">
    <property type="entry name" value="DHQ_synth"/>
    <property type="match status" value="1"/>
</dbReference>
<dbReference type="SUPFAM" id="SSF56796">
    <property type="entry name" value="Dehydroquinate synthase-like"/>
    <property type="match status" value="1"/>
</dbReference>
<organism>
    <name type="scientific">Streptococcus pneumoniae (strain ATCC 700669 / Spain 23F-1)</name>
    <dbReference type="NCBI Taxonomy" id="561276"/>
    <lineage>
        <taxon>Bacteria</taxon>
        <taxon>Bacillati</taxon>
        <taxon>Bacillota</taxon>
        <taxon>Bacilli</taxon>
        <taxon>Lactobacillales</taxon>
        <taxon>Streptococcaceae</taxon>
        <taxon>Streptococcus</taxon>
    </lineage>
</organism>
<sequence>MKIRIDIPHHPYDIQIEKGCLAQAGQWLRELWQPQKVVIVTDNHVASLYAEKVKLSLEDAGFQVAVFDFLEGEERKNLTTVQKVYEFLVKQGLTRSDGIVALGGGVVGDLAGFVASTYMRGIHFVQIPTSLTAQVDSSIGGKTGVNTPFAKNMVGTFAQPDGVLIDPLVLETLGKRELIEGMGEVIKYGLIEDPELWALLTELDGSVESILEHAETLIEHSCQVKRKMVVEDELDNGVRLYLNFGHTIGHAIEATAGYGKVMHGEAVAMGMVQISKVAEKKGLMPAGITQSITDMCQKFGLPVDYENWDVDKLYQALTHDKKARGNTLKLVLVPELGSATIHPVSLEEMKDYLVK</sequence>
<evidence type="ECO:0000255" key="1">
    <source>
        <dbReference type="HAMAP-Rule" id="MF_00110"/>
    </source>
</evidence>
<protein>
    <recommendedName>
        <fullName evidence="1">3-dehydroquinate synthase</fullName>
        <shortName evidence="1">DHQS</shortName>
        <ecNumber evidence="1">4.2.3.4</ecNumber>
    </recommendedName>
</protein>
<accession>B8ZKM4</accession>
<keyword id="KW-0028">Amino-acid biosynthesis</keyword>
<keyword id="KW-0057">Aromatic amino acid biosynthesis</keyword>
<keyword id="KW-0170">Cobalt</keyword>
<keyword id="KW-0963">Cytoplasm</keyword>
<keyword id="KW-0456">Lyase</keyword>
<keyword id="KW-0479">Metal-binding</keyword>
<keyword id="KW-0520">NAD</keyword>
<keyword id="KW-0547">Nucleotide-binding</keyword>
<keyword id="KW-0862">Zinc</keyword>
<gene>
    <name evidence="1" type="primary">aroB</name>
    <name type="ordered locus">SPN23F13410</name>
</gene>
<comment type="function">
    <text evidence="1">Catalyzes the conversion of 3-deoxy-D-arabino-heptulosonate 7-phosphate (DAHP) to dehydroquinate (DHQ).</text>
</comment>
<comment type="catalytic activity">
    <reaction evidence="1">
        <text>7-phospho-2-dehydro-3-deoxy-D-arabino-heptonate = 3-dehydroquinate + phosphate</text>
        <dbReference type="Rhea" id="RHEA:21968"/>
        <dbReference type="ChEBI" id="CHEBI:32364"/>
        <dbReference type="ChEBI" id="CHEBI:43474"/>
        <dbReference type="ChEBI" id="CHEBI:58394"/>
        <dbReference type="EC" id="4.2.3.4"/>
    </reaction>
</comment>
<comment type="cofactor">
    <cofactor evidence="1">
        <name>Co(2+)</name>
        <dbReference type="ChEBI" id="CHEBI:48828"/>
    </cofactor>
    <cofactor evidence="1">
        <name>Zn(2+)</name>
        <dbReference type="ChEBI" id="CHEBI:29105"/>
    </cofactor>
    <text evidence="1">Binds 1 divalent metal cation per subunit. Can use either Co(2+) or Zn(2+).</text>
</comment>
<comment type="cofactor">
    <cofactor evidence="1">
        <name>NAD(+)</name>
        <dbReference type="ChEBI" id="CHEBI:57540"/>
    </cofactor>
</comment>
<comment type="pathway">
    <text evidence="1">Metabolic intermediate biosynthesis; chorismate biosynthesis; chorismate from D-erythrose 4-phosphate and phosphoenolpyruvate: step 2/7.</text>
</comment>
<comment type="subcellular location">
    <subcellularLocation>
        <location evidence="1">Cytoplasm</location>
    </subcellularLocation>
</comment>
<comment type="similarity">
    <text evidence="1">Belongs to the sugar phosphate cyclases superfamily. Dehydroquinate synthase family.</text>
</comment>
<feature type="chain" id="PRO_1000119094" description="3-dehydroquinate synthase">
    <location>
        <begin position="1"/>
        <end position="355"/>
    </location>
</feature>
<feature type="binding site" evidence="1">
    <location>
        <begin position="71"/>
        <end position="76"/>
    </location>
    <ligand>
        <name>NAD(+)</name>
        <dbReference type="ChEBI" id="CHEBI:57540"/>
    </ligand>
</feature>
<feature type="binding site" evidence="1">
    <location>
        <begin position="105"/>
        <end position="109"/>
    </location>
    <ligand>
        <name>NAD(+)</name>
        <dbReference type="ChEBI" id="CHEBI:57540"/>
    </ligand>
</feature>
<feature type="binding site" evidence="1">
    <location>
        <begin position="129"/>
        <end position="130"/>
    </location>
    <ligand>
        <name>NAD(+)</name>
        <dbReference type="ChEBI" id="CHEBI:57540"/>
    </ligand>
</feature>
<feature type="binding site" evidence="1">
    <location>
        <position position="142"/>
    </location>
    <ligand>
        <name>NAD(+)</name>
        <dbReference type="ChEBI" id="CHEBI:57540"/>
    </ligand>
</feature>
<feature type="binding site" evidence="1">
    <location>
        <position position="151"/>
    </location>
    <ligand>
        <name>NAD(+)</name>
        <dbReference type="ChEBI" id="CHEBI:57540"/>
    </ligand>
</feature>
<feature type="binding site" evidence="1">
    <location>
        <position position="184"/>
    </location>
    <ligand>
        <name>Zn(2+)</name>
        <dbReference type="ChEBI" id="CHEBI:29105"/>
    </ligand>
</feature>
<feature type="binding site" evidence="1">
    <location>
        <position position="246"/>
    </location>
    <ligand>
        <name>Zn(2+)</name>
        <dbReference type="ChEBI" id="CHEBI:29105"/>
    </ligand>
</feature>
<feature type="binding site" evidence="1">
    <location>
        <position position="263"/>
    </location>
    <ligand>
        <name>Zn(2+)</name>
        <dbReference type="ChEBI" id="CHEBI:29105"/>
    </ligand>
</feature>